<protein>
    <recommendedName>
        <fullName>Three prime repair exonuclease 2</fullName>
        <ecNumber>3.1.11.2</ecNumber>
    </recommendedName>
    <alternativeName>
        <fullName>3'-5' exonuclease TREX2</fullName>
    </alternativeName>
</protein>
<keyword id="KW-0002">3D-structure</keyword>
<keyword id="KW-0227">DNA damage</keyword>
<keyword id="KW-0234">DNA repair</keyword>
<keyword id="KW-0269">Exonuclease</keyword>
<keyword id="KW-0378">Hydrolase</keyword>
<keyword id="KW-0460">Magnesium</keyword>
<keyword id="KW-0479">Metal-binding</keyword>
<keyword id="KW-0540">Nuclease</keyword>
<keyword id="KW-0539">Nucleus</keyword>
<keyword id="KW-1185">Reference proteome</keyword>
<feature type="chain" id="PRO_0000109871" description="Three prime repair exonuclease 2">
    <location>
        <begin position="1"/>
        <end position="236"/>
    </location>
</feature>
<feature type="active site" description="Proton donor/acceptor" evidence="1">
    <location>
        <position position="188"/>
    </location>
</feature>
<feature type="binding site" evidence="1">
    <location>
        <position position="14"/>
    </location>
    <ligand>
        <name>Mg(2+)</name>
        <dbReference type="ChEBI" id="CHEBI:18420"/>
        <label>1</label>
    </ligand>
</feature>
<feature type="binding site" evidence="1">
    <location>
        <position position="14"/>
    </location>
    <ligand>
        <name>Mg(2+)</name>
        <dbReference type="ChEBI" id="CHEBI:18420"/>
        <label>2</label>
    </ligand>
</feature>
<feature type="binding site" evidence="1">
    <location>
        <begin position="16"/>
        <end position="17"/>
    </location>
    <ligand>
        <name>substrate</name>
    </ligand>
</feature>
<feature type="binding site" evidence="1">
    <location>
        <position position="16"/>
    </location>
    <ligand>
        <name>Mg(2+)</name>
        <dbReference type="ChEBI" id="CHEBI:18420"/>
        <label>1</label>
    </ligand>
</feature>
<feature type="binding site" evidence="1">
    <location>
        <position position="122"/>
    </location>
    <ligand>
        <name>substrate</name>
    </ligand>
</feature>
<feature type="binding site" evidence="1">
    <location>
        <position position="193"/>
    </location>
    <ligand>
        <name>Mg(2+)</name>
        <dbReference type="ChEBI" id="CHEBI:18420"/>
        <label>1</label>
    </ligand>
</feature>
<feature type="binding site" evidence="1">
    <location>
        <position position="193"/>
    </location>
    <ligand>
        <name>substrate</name>
    </ligand>
</feature>
<feature type="strand" evidence="5">
    <location>
        <begin position="9"/>
        <end position="19"/>
    </location>
</feature>
<feature type="helix" evidence="5">
    <location>
        <begin position="21"/>
        <end position="23"/>
    </location>
</feature>
<feature type="strand" evidence="5">
    <location>
        <begin position="27"/>
        <end position="36"/>
    </location>
</feature>
<feature type="helix" evidence="5">
    <location>
        <begin position="37"/>
        <end position="41"/>
    </location>
</feature>
<feature type="strand" evidence="5">
    <location>
        <begin position="55"/>
        <end position="63"/>
    </location>
</feature>
<feature type="helix" evidence="5">
    <location>
        <begin position="72"/>
        <end position="78"/>
    </location>
</feature>
<feature type="helix" evidence="5">
    <location>
        <begin position="82"/>
        <end position="87"/>
    </location>
</feature>
<feature type="helix" evidence="5">
    <location>
        <begin position="95"/>
        <end position="106"/>
    </location>
</feature>
<feature type="strand" evidence="5">
    <location>
        <begin position="110"/>
        <end position="116"/>
    </location>
</feature>
<feature type="turn" evidence="5">
    <location>
        <begin position="117"/>
        <end position="122"/>
    </location>
</feature>
<feature type="helix" evidence="5">
    <location>
        <begin position="123"/>
        <end position="132"/>
    </location>
</feature>
<feature type="turn" evidence="5">
    <location>
        <begin position="133"/>
        <end position="135"/>
    </location>
</feature>
<feature type="strand" evidence="5">
    <location>
        <begin position="143"/>
        <end position="146"/>
    </location>
</feature>
<feature type="helix" evidence="5">
    <location>
        <begin position="147"/>
        <end position="157"/>
    </location>
</feature>
<feature type="helix" evidence="5">
    <location>
        <begin position="172"/>
        <end position="180"/>
    </location>
</feature>
<feature type="turn" evidence="4">
    <location>
        <begin position="185"/>
        <end position="188"/>
    </location>
</feature>
<feature type="helix" evidence="5">
    <location>
        <begin position="190"/>
        <end position="203"/>
    </location>
</feature>
<feature type="helix" evidence="5">
    <location>
        <begin position="205"/>
        <end position="215"/>
    </location>
</feature>
<feature type="helix" evidence="5">
    <location>
        <begin position="219"/>
        <end position="221"/>
    </location>
</feature>
<name>TREX2_MOUSE</name>
<sequence length="236" mass="25955">MSEPPRAETFVFLDLEATGLPNMDPEIAEISLFAVHRSSLENPERDDSGSLVLPRVLDKLTLCMCPERPFTAKASEITGLSSESLMHCGKAGFNGAVVRTLQGFLSRQEGPICLVAHNGFDYDFPLLCTELQRLGAHLPQDTVCLDTLPALRGLDRAHSHGTRAQGRKSYSLASLFHRYFQAEPSAAHSAEGDVHTLLLIFLHRAPELLAWADEQARSWAHIEPMYVPPDGPSLEA</sequence>
<organism>
    <name type="scientific">Mus musculus</name>
    <name type="common">Mouse</name>
    <dbReference type="NCBI Taxonomy" id="10090"/>
    <lineage>
        <taxon>Eukaryota</taxon>
        <taxon>Metazoa</taxon>
        <taxon>Chordata</taxon>
        <taxon>Craniata</taxon>
        <taxon>Vertebrata</taxon>
        <taxon>Euteleostomi</taxon>
        <taxon>Mammalia</taxon>
        <taxon>Eutheria</taxon>
        <taxon>Euarchontoglires</taxon>
        <taxon>Glires</taxon>
        <taxon>Rodentia</taxon>
        <taxon>Myomorpha</taxon>
        <taxon>Muroidea</taxon>
        <taxon>Muridae</taxon>
        <taxon>Murinae</taxon>
        <taxon>Mus</taxon>
        <taxon>Mus</taxon>
    </lineage>
</organism>
<comment type="function">
    <text evidence="2">Exonuclease with a preference for double-stranded DNA with mismatched 3' termini. May play a role in DNA repair.</text>
</comment>
<comment type="catalytic activity">
    <reaction>
        <text>Exonucleolytic cleavage in the 3'- to 5'-direction to yield nucleoside 5'-phosphates.</text>
        <dbReference type="EC" id="3.1.11.2"/>
    </reaction>
</comment>
<comment type="cofactor">
    <cofactor evidence="1">
        <name>Mg(2+)</name>
        <dbReference type="ChEBI" id="CHEBI:18420"/>
    </cofactor>
    <text evidence="1">Binds 2 Mg(2+) per subunit. The second magnesium ion interacts with only one residue. Substitution with Mn(2+) results in partial activity.</text>
</comment>
<comment type="subunit">
    <text evidence="1">Homodimer.</text>
</comment>
<comment type="subcellular location">
    <subcellularLocation>
        <location evidence="3">Nucleus</location>
    </subcellularLocation>
</comment>
<comment type="similarity">
    <text evidence="3">Belongs to the exonuclease superfamily. TREX family.</text>
</comment>
<reference key="1">
    <citation type="journal article" date="1999" name="J. Biol. Chem.">
        <title>Identification and expression of the TREX1 and TREX2 cDNA sequences encoding mammalian 3'--&gt;5' exonucleases.</title>
        <authorList>
            <person name="Mazur D.J."/>
            <person name="Perrino F.W."/>
        </authorList>
    </citation>
    <scope>NUCLEOTIDE SEQUENCE [MRNA]</scope>
    <scope>FUNCTION</scope>
</reference>
<gene>
    <name type="primary">Trex2</name>
</gene>
<accession>Q9R1A9</accession>
<evidence type="ECO:0000250" key="1"/>
<evidence type="ECO:0000269" key="2">
    <source>
    </source>
</evidence>
<evidence type="ECO:0000305" key="3"/>
<evidence type="ECO:0007829" key="4">
    <source>
        <dbReference type="PDB" id="6A46"/>
    </source>
</evidence>
<evidence type="ECO:0007829" key="5">
    <source>
        <dbReference type="PDB" id="6A47"/>
    </source>
</evidence>
<proteinExistence type="evidence at protein level"/>
<dbReference type="EC" id="3.1.11.2"/>
<dbReference type="EMBL" id="AF151108">
    <property type="protein sequence ID" value="AAD48777.1"/>
    <property type="molecule type" value="mRNA"/>
</dbReference>
<dbReference type="CCDS" id="CCDS30201.1"/>
<dbReference type="RefSeq" id="NP_036037.1">
    <property type="nucleotide sequence ID" value="NM_011907.4"/>
</dbReference>
<dbReference type="PDB" id="6A45">
    <property type="method" value="X-ray"/>
    <property type="resolution" value="1.90 A"/>
    <property type="chains" value="A/B=1-236"/>
</dbReference>
<dbReference type="PDB" id="6A46">
    <property type="method" value="X-ray"/>
    <property type="resolution" value="2.00 A"/>
    <property type="chains" value="A/B=1-236"/>
</dbReference>
<dbReference type="PDB" id="6A47">
    <property type="method" value="X-ray"/>
    <property type="resolution" value="1.90 A"/>
    <property type="chains" value="A/B=1-236"/>
</dbReference>
<dbReference type="PDB" id="6A4B">
    <property type="method" value="X-ray"/>
    <property type="resolution" value="2.70 A"/>
    <property type="chains" value="A/B/C/D/E/F=1-236"/>
</dbReference>
<dbReference type="PDBsum" id="6A45"/>
<dbReference type="PDBsum" id="6A46"/>
<dbReference type="PDBsum" id="6A47"/>
<dbReference type="PDBsum" id="6A4B"/>
<dbReference type="SMR" id="Q9R1A9"/>
<dbReference type="BioGRID" id="204898">
    <property type="interactions" value="1"/>
</dbReference>
<dbReference type="FunCoup" id="Q9R1A9">
    <property type="interactions" value="290"/>
</dbReference>
<dbReference type="STRING" id="10090.ENSMUSP00000033738"/>
<dbReference type="iPTMnet" id="Q9R1A9"/>
<dbReference type="PhosphoSitePlus" id="Q9R1A9"/>
<dbReference type="PaxDb" id="10090-ENSMUSP00000033738"/>
<dbReference type="ProteomicsDB" id="298214"/>
<dbReference type="Antibodypedia" id="30811">
    <property type="antibodies" value="127 antibodies from 27 providers"/>
</dbReference>
<dbReference type="DNASU" id="24102"/>
<dbReference type="Ensembl" id="ENSMUST00000033738.8">
    <property type="protein sequence ID" value="ENSMUSP00000033738.8"/>
    <property type="gene ID" value="ENSMUSG00000031372.8"/>
</dbReference>
<dbReference type="GeneID" id="24102"/>
<dbReference type="KEGG" id="mmu:24102"/>
<dbReference type="UCSC" id="uc009tlt.2">
    <property type="organism name" value="mouse"/>
</dbReference>
<dbReference type="AGR" id="MGI:1346343"/>
<dbReference type="CTD" id="11219"/>
<dbReference type="MGI" id="MGI:1346343">
    <property type="gene designation" value="Trex2"/>
</dbReference>
<dbReference type="VEuPathDB" id="HostDB:ENSMUSG00000031372"/>
<dbReference type="eggNOG" id="KOG4793">
    <property type="taxonomic scope" value="Eukaryota"/>
</dbReference>
<dbReference type="GeneTree" id="ENSGT00390000012715"/>
<dbReference type="HOGENOM" id="CLU_067419_1_0_1"/>
<dbReference type="InParanoid" id="Q9R1A9"/>
<dbReference type="OMA" id="CIAIMKL"/>
<dbReference type="OrthoDB" id="10250935at2759"/>
<dbReference type="PhylomeDB" id="Q9R1A9"/>
<dbReference type="TreeFam" id="TF323333"/>
<dbReference type="BioGRID-ORCS" id="24102">
    <property type="hits" value="2 hits in 114 CRISPR screens"/>
</dbReference>
<dbReference type="PRO" id="PR:Q9R1A9"/>
<dbReference type="Proteomes" id="UP000000589">
    <property type="component" value="Chromosome X"/>
</dbReference>
<dbReference type="RNAct" id="Q9R1A9">
    <property type="molecule type" value="protein"/>
</dbReference>
<dbReference type="Bgee" id="ENSMUSG00000031372">
    <property type="expression patterns" value="Expressed in esophagus and 20 other cell types or tissues"/>
</dbReference>
<dbReference type="ExpressionAtlas" id="Q9R1A9">
    <property type="expression patterns" value="baseline and differential"/>
</dbReference>
<dbReference type="GO" id="GO:0005634">
    <property type="term" value="C:nucleus"/>
    <property type="evidence" value="ECO:0007669"/>
    <property type="project" value="UniProtKB-SubCell"/>
</dbReference>
<dbReference type="GO" id="GO:0008296">
    <property type="term" value="F:3'-5'-DNA exonuclease activity"/>
    <property type="evidence" value="ECO:0000250"/>
    <property type="project" value="UniProtKB"/>
</dbReference>
<dbReference type="GO" id="GO:0008311">
    <property type="term" value="F:double-stranded DNA 3'-5' DNA exonuclease activity"/>
    <property type="evidence" value="ECO:0007669"/>
    <property type="project" value="UniProtKB-EC"/>
</dbReference>
<dbReference type="GO" id="GO:0000287">
    <property type="term" value="F:magnesium ion binding"/>
    <property type="evidence" value="ECO:0000250"/>
    <property type="project" value="UniProtKB"/>
</dbReference>
<dbReference type="GO" id="GO:0003676">
    <property type="term" value="F:nucleic acid binding"/>
    <property type="evidence" value="ECO:0007669"/>
    <property type="project" value="InterPro"/>
</dbReference>
<dbReference type="GO" id="GO:0042803">
    <property type="term" value="F:protein homodimerization activity"/>
    <property type="evidence" value="ECO:0007669"/>
    <property type="project" value="Ensembl"/>
</dbReference>
<dbReference type="GO" id="GO:0006259">
    <property type="term" value="P:DNA metabolic process"/>
    <property type="evidence" value="ECO:0000250"/>
    <property type="project" value="UniProtKB"/>
</dbReference>
<dbReference type="GO" id="GO:0006281">
    <property type="term" value="P:DNA repair"/>
    <property type="evidence" value="ECO:0007669"/>
    <property type="project" value="UniProtKB-KW"/>
</dbReference>
<dbReference type="CDD" id="cd06136">
    <property type="entry name" value="TREX1_2"/>
    <property type="match status" value="1"/>
</dbReference>
<dbReference type="FunFam" id="3.30.420.10:FF:000046">
    <property type="entry name" value="Three prime repair exonuclease 1"/>
    <property type="match status" value="1"/>
</dbReference>
<dbReference type="Gene3D" id="3.30.420.10">
    <property type="entry name" value="Ribonuclease H-like superfamily/Ribonuclease H"/>
    <property type="match status" value="1"/>
</dbReference>
<dbReference type="InterPro" id="IPR013520">
    <property type="entry name" value="Exonuclease_RNaseT/DNA_pol3"/>
</dbReference>
<dbReference type="InterPro" id="IPR012337">
    <property type="entry name" value="RNaseH-like_sf"/>
</dbReference>
<dbReference type="InterPro" id="IPR036397">
    <property type="entry name" value="RNaseH_sf"/>
</dbReference>
<dbReference type="InterPro" id="IPR040393">
    <property type="entry name" value="TREX1/2"/>
</dbReference>
<dbReference type="PANTHER" id="PTHR13058">
    <property type="entry name" value="THREE PRIME REPAIR EXONUCLEASE 1, 2"/>
    <property type="match status" value="1"/>
</dbReference>
<dbReference type="PANTHER" id="PTHR13058:SF24">
    <property type="entry name" value="THREE PRIME REPAIR EXONUCLEASE 2"/>
    <property type="match status" value="1"/>
</dbReference>
<dbReference type="Pfam" id="PF00929">
    <property type="entry name" value="RNase_T"/>
    <property type="match status" value="1"/>
</dbReference>
<dbReference type="SMART" id="SM00479">
    <property type="entry name" value="EXOIII"/>
    <property type="match status" value="1"/>
</dbReference>
<dbReference type="SUPFAM" id="SSF53098">
    <property type="entry name" value="Ribonuclease H-like"/>
    <property type="match status" value="1"/>
</dbReference>